<reference key="1">
    <citation type="journal article" date="2004" name="Nat. Genet.">
        <title>Complete sequencing and characterization of 21,243 full-length human cDNAs.</title>
        <authorList>
            <person name="Ota T."/>
            <person name="Suzuki Y."/>
            <person name="Nishikawa T."/>
            <person name="Otsuki T."/>
            <person name="Sugiyama T."/>
            <person name="Irie R."/>
            <person name="Wakamatsu A."/>
            <person name="Hayashi K."/>
            <person name="Sato H."/>
            <person name="Nagai K."/>
            <person name="Kimura K."/>
            <person name="Makita H."/>
            <person name="Sekine M."/>
            <person name="Obayashi M."/>
            <person name="Nishi T."/>
            <person name="Shibahara T."/>
            <person name="Tanaka T."/>
            <person name="Ishii S."/>
            <person name="Yamamoto J."/>
            <person name="Saito K."/>
            <person name="Kawai Y."/>
            <person name="Isono Y."/>
            <person name="Nakamura Y."/>
            <person name="Nagahari K."/>
            <person name="Murakami K."/>
            <person name="Yasuda T."/>
            <person name="Iwayanagi T."/>
            <person name="Wagatsuma M."/>
            <person name="Shiratori A."/>
            <person name="Sudo H."/>
            <person name="Hosoiri T."/>
            <person name="Kaku Y."/>
            <person name="Kodaira H."/>
            <person name="Kondo H."/>
            <person name="Sugawara M."/>
            <person name="Takahashi M."/>
            <person name="Kanda K."/>
            <person name="Yokoi T."/>
            <person name="Furuya T."/>
            <person name="Kikkawa E."/>
            <person name="Omura Y."/>
            <person name="Abe K."/>
            <person name="Kamihara K."/>
            <person name="Katsuta N."/>
            <person name="Sato K."/>
            <person name="Tanikawa M."/>
            <person name="Yamazaki M."/>
            <person name="Ninomiya K."/>
            <person name="Ishibashi T."/>
            <person name="Yamashita H."/>
            <person name="Murakawa K."/>
            <person name="Fujimori K."/>
            <person name="Tanai H."/>
            <person name="Kimata M."/>
            <person name="Watanabe M."/>
            <person name="Hiraoka S."/>
            <person name="Chiba Y."/>
            <person name="Ishida S."/>
            <person name="Ono Y."/>
            <person name="Takiguchi S."/>
            <person name="Watanabe S."/>
            <person name="Yosida M."/>
            <person name="Hotuta T."/>
            <person name="Kusano J."/>
            <person name="Kanehori K."/>
            <person name="Takahashi-Fujii A."/>
            <person name="Hara H."/>
            <person name="Tanase T.-O."/>
            <person name="Nomura Y."/>
            <person name="Togiya S."/>
            <person name="Komai F."/>
            <person name="Hara R."/>
            <person name="Takeuchi K."/>
            <person name="Arita M."/>
            <person name="Imose N."/>
            <person name="Musashino K."/>
            <person name="Yuuki H."/>
            <person name="Oshima A."/>
            <person name="Sasaki N."/>
            <person name="Aotsuka S."/>
            <person name="Yoshikawa Y."/>
            <person name="Matsunawa H."/>
            <person name="Ichihara T."/>
            <person name="Shiohata N."/>
            <person name="Sano S."/>
            <person name="Moriya S."/>
            <person name="Momiyama H."/>
            <person name="Satoh N."/>
            <person name="Takami S."/>
            <person name="Terashima Y."/>
            <person name="Suzuki O."/>
            <person name="Nakagawa S."/>
            <person name="Senoh A."/>
            <person name="Mizoguchi H."/>
            <person name="Goto Y."/>
            <person name="Shimizu F."/>
            <person name="Wakebe H."/>
            <person name="Hishigaki H."/>
            <person name="Watanabe T."/>
            <person name="Sugiyama A."/>
            <person name="Takemoto M."/>
            <person name="Kawakami B."/>
            <person name="Yamazaki M."/>
            <person name="Watanabe K."/>
            <person name="Kumagai A."/>
            <person name="Itakura S."/>
            <person name="Fukuzumi Y."/>
            <person name="Fujimori Y."/>
            <person name="Komiyama M."/>
            <person name="Tashiro H."/>
            <person name="Tanigami A."/>
            <person name="Fujiwara T."/>
            <person name="Ono T."/>
            <person name="Yamada K."/>
            <person name="Fujii Y."/>
            <person name="Ozaki K."/>
            <person name="Hirao M."/>
            <person name="Ohmori Y."/>
            <person name="Kawabata A."/>
            <person name="Hikiji T."/>
            <person name="Kobatake N."/>
            <person name="Inagaki H."/>
            <person name="Ikema Y."/>
            <person name="Okamoto S."/>
            <person name="Okitani R."/>
            <person name="Kawakami T."/>
            <person name="Noguchi S."/>
            <person name="Itoh T."/>
            <person name="Shigeta K."/>
            <person name="Senba T."/>
            <person name="Matsumura K."/>
            <person name="Nakajima Y."/>
            <person name="Mizuno T."/>
            <person name="Morinaga M."/>
            <person name="Sasaki M."/>
            <person name="Togashi T."/>
            <person name="Oyama M."/>
            <person name="Hata H."/>
            <person name="Watanabe M."/>
            <person name="Komatsu T."/>
            <person name="Mizushima-Sugano J."/>
            <person name="Satoh T."/>
            <person name="Shirai Y."/>
            <person name="Takahashi Y."/>
            <person name="Nakagawa K."/>
            <person name="Okumura K."/>
            <person name="Nagase T."/>
            <person name="Nomura N."/>
            <person name="Kikuchi H."/>
            <person name="Masuho Y."/>
            <person name="Yamashita R."/>
            <person name="Nakai K."/>
            <person name="Yada T."/>
            <person name="Nakamura Y."/>
            <person name="Ohara O."/>
            <person name="Isogai T."/>
            <person name="Sugano S."/>
        </authorList>
    </citation>
    <scope>NUCLEOTIDE SEQUENCE [LARGE SCALE MRNA] (ISOFORM 2)</scope>
</reference>
<reference key="2">
    <citation type="journal article" date="2007" name="BMC Genomics">
        <title>The full-ORF clone resource of the German cDNA consortium.</title>
        <authorList>
            <person name="Bechtel S."/>
            <person name="Rosenfelder H."/>
            <person name="Duda A."/>
            <person name="Schmidt C.P."/>
            <person name="Ernst U."/>
            <person name="Wellenreuther R."/>
            <person name="Mehrle A."/>
            <person name="Schuster C."/>
            <person name="Bahr A."/>
            <person name="Bloecker H."/>
            <person name="Heubner D."/>
            <person name="Hoerlein A."/>
            <person name="Michel G."/>
            <person name="Wedler H."/>
            <person name="Koehrer K."/>
            <person name="Ottenwaelder B."/>
            <person name="Poustka A."/>
            <person name="Wiemann S."/>
            <person name="Schupp I."/>
        </authorList>
    </citation>
    <scope>NUCLEOTIDE SEQUENCE [LARGE SCALE MRNA] (ISOFORM 1)</scope>
    <source>
        <tissue>Testis carcinoma</tissue>
    </source>
</reference>
<reference key="3">
    <citation type="journal article" date="2005" name="Nature">
        <title>Generation and annotation of the DNA sequences of human chromosomes 2 and 4.</title>
        <authorList>
            <person name="Hillier L.W."/>
            <person name="Graves T.A."/>
            <person name="Fulton R.S."/>
            <person name="Fulton L.A."/>
            <person name="Pepin K.H."/>
            <person name="Minx P."/>
            <person name="Wagner-McPherson C."/>
            <person name="Layman D."/>
            <person name="Wylie K."/>
            <person name="Sekhon M."/>
            <person name="Becker M.C."/>
            <person name="Fewell G.A."/>
            <person name="Delehaunty K.D."/>
            <person name="Miner T.L."/>
            <person name="Nash W.E."/>
            <person name="Kremitzki C."/>
            <person name="Oddy L."/>
            <person name="Du H."/>
            <person name="Sun H."/>
            <person name="Bradshaw-Cordum H."/>
            <person name="Ali J."/>
            <person name="Carter J."/>
            <person name="Cordes M."/>
            <person name="Harris A."/>
            <person name="Isak A."/>
            <person name="van Brunt A."/>
            <person name="Nguyen C."/>
            <person name="Du F."/>
            <person name="Courtney L."/>
            <person name="Kalicki J."/>
            <person name="Ozersky P."/>
            <person name="Abbott S."/>
            <person name="Armstrong J."/>
            <person name="Belter E.A."/>
            <person name="Caruso L."/>
            <person name="Cedroni M."/>
            <person name="Cotton M."/>
            <person name="Davidson T."/>
            <person name="Desai A."/>
            <person name="Elliott G."/>
            <person name="Erb T."/>
            <person name="Fronick C."/>
            <person name="Gaige T."/>
            <person name="Haakenson W."/>
            <person name="Haglund K."/>
            <person name="Holmes A."/>
            <person name="Harkins R."/>
            <person name="Kim K."/>
            <person name="Kruchowski S.S."/>
            <person name="Strong C.M."/>
            <person name="Grewal N."/>
            <person name="Goyea E."/>
            <person name="Hou S."/>
            <person name="Levy A."/>
            <person name="Martinka S."/>
            <person name="Mead K."/>
            <person name="McLellan M.D."/>
            <person name="Meyer R."/>
            <person name="Randall-Maher J."/>
            <person name="Tomlinson C."/>
            <person name="Dauphin-Kohlberg S."/>
            <person name="Kozlowicz-Reilly A."/>
            <person name="Shah N."/>
            <person name="Swearengen-Shahid S."/>
            <person name="Snider J."/>
            <person name="Strong J.T."/>
            <person name="Thompson J."/>
            <person name="Yoakum M."/>
            <person name="Leonard S."/>
            <person name="Pearman C."/>
            <person name="Trani L."/>
            <person name="Radionenko M."/>
            <person name="Waligorski J.E."/>
            <person name="Wang C."/>
            <person name="Rock S.M."/>
            <person name="Tin-Wollam A.-M."/>
            <person name="Maupin R."/>
            <person name="Latreille P."/>
            <person name="Wendl M.C."/>
            <person name="Yang S.-P."/>
            <person name="Pohl C."/>
            <person name="Wallis J.W."/>
            <person name="Spieth J."/>
            <person name="Bieri T.A."/>
            <person name="Berkowicz N."/>
            <person name="Nelson J.O."/>
            <person name="Osborne J."/>
            <person name="Ding L."/>
            <person name="Meyer R."/>
            <person name="Sabo A."/>
            <person name="Shotland Y."/>
            <person name="Sinha P."/>
            <person name="Wohldmann P.E."/>
            <person name="Cook L.L."/>
            <person name="Hickenbotham M.T."/>
            <person name="Eldred J."/>
            <person name="Williams D."/>
            <person name="Jones T.A."/>
            <person name="She X."/>
            <person name="Ciccarelli F.D."/>
            <person name="Izaurralde E."/>
            <person name="Taylor J."/>
            <person name="Schmutz J."/>
            <person name="Myers R.M."/>
            <person name="Cox D.R."/>
            <person name="Huang X."/>
            <person name="McPherson J.D."/>
            <person name="Mardis E.R."/>
            <person name="Clifton S.W."/>
            <person name="Warren W.C."/>
            <person name="Chinwalla A.T."/>
            <person name="Eddy S.R."/>
            <person name="Marra M.A."/>
            <person name="Ovcharenko I."/>
            <person name="Furey T.S."/>
            <person name="Miller W."/>
            <person name="Eichler E.E."/>
            <person name="Bork P."/>
            <person name="Suyama M."/>
            <person name="Torrents D."/>
            <person name="Waterston R.H."/>
            <person name="Wilson R.K."/>
        </authorList>
    </citation>
    <scope>NUCLEOTIDE SEQUENCE [LARGE SCALE GENOMIC DNA]</scope>
</reference>
<reference key="4">
    <citation type="submission" date="2005-09" db="EMBL/GenBank/DDBJ databases">
        <authorList>
            <person name="Mural R.J."/>
            <person name="Istrail S."/>
            <person name="Sutton G.G."/>
            <person name="Florea L."/>
            <person name="Halpern A.L."/>
            <person name="Mobarry C.M."/>
            <person name="Lippert R."/>
            <person name="Walenz B."/>
            <person name="Shatkay H."/>
            <person name="Dew I."/>
            <person name="Miller J.R."/>
            <person name="Flanigan M.J."/>
            <person name="Edwards N.J."/>
            <person name="Bolanos R."/>
            <person name="Fasulo D."/>
            <person name="Halldorsson B.V."/>
            <person name="Hannenhalli S."/>
            <person name="Turner R."/>
            <person name="Yooseph S."/>
            <person name="Lu F."/>
            <person name="Nusskern D.R."/>
            <person name="Shue B.C."/>
            <person name="Zheng X.H."/>
            <person name="Zhong F."/>
            <person name="Delcher A.L."/>
            <person name="Huson D.H."/>
            <person name="Kravitz S.A."/>
            <person name="Mouchard L."/>
            <person name="Reinert K."/>
            <person name="Remington K.A."/>
            <person name="Clark A.G."/>
            <person name="Waterman M.S."/>
            <person name="Eichler E.E."/>
            <person name="Adams M.D."/>
            <person name="Hunkapiller M.W."/>
            <person name="Myers E.W."/>
            <person name="Venter J.C."/>
        </authorList>
    </citation>
    <scope>NUCLEOTIDE SEQUENCE [LARGE SCALE GENOMIC DNA]</scope>
</reference>
<reference key="5">
    <citation type="journal article" date="2004" name="Genome Res.">
        <title>The status, quality, and expansion of the NIH full-length cDNA project: the Mammalian Gene Collection (MGC).</title>
        <authorList>
            <consortium name="The MGC Project Team"/>
        </authorList>
    </citation>
    <scope>NUCLEOTIDE SEQUENCE [LARGE SCALE MRNA] (ISOFORMS 1 AND 2)</scope>
    <source>
        <tissue>Brain</tissue>
    </source>
</reference>
<reference key="6">
    <citation type="journal article" date="2006" name="Mol. Cell">
        <title>A family of diverse Cul4-Ddb1-interacting proteins includes Cdt2, which is required for S phase destruction of the replication factor Cdt1.</title>
        <authorList>
            <person name="Jin J."/>
            <person name="Arias E.E."/>
            <person name="Chen J."/>
            <person name="Harper J.W."/>
            <person name="Walter J.C."/>
        </authorList>
    </citation>
    <scope>FUNCTION</scope>
    <scope>INTERACTION WITH DDB1; CUL4A AND CUL4B</scope>
    <scope>IDENTIFICATION BY MASS SPECTROMETRY</scope>
</reference>
<reference key="7">
    <citation type="journal article" date="2008" name="Am. J. Hum. Genet.">
        <title>Mutations in C2orf37, encoding a nucleolar protein, cause hypogonadism, alopecia, diabetes mellitus, mental retardation, and extrapyramidal syndrome.</title>
        <authorList>
            <person name="Alazami A.M."/>
            <person name="Al-Saif A."/>
            <person name="Al-Semari A."/>
            <person name="Bohlega S."/>
            <person name="Zlitni S."/>
            <person name="Alzahrani F."/>
            <person name="Bavi P."/>
            <person name="Kaya N."/>
            <person name="Colak D."/>
            <person name="Khalak H."/>
            <person name="Baltus A."/>
            <person name="Peterlin B."/>
            <person name="Danda S."/>
            <person name="Bhatia K.P."/>
            <person name="Schneider S.A."/>
            <person name="Sakati N."/>
            <person name="Walsh C.A."/>
            <person name="Al-Mohanna F."/>
            <person name="Meyer B."/>
            <person name="Alkuraya F.S."/>
        </authorList>
    </citation>
    <scope>TISSUE SPECIFICITY</scope>
    <scope>SUBCELLULAR LOCATION</scope>
    <scope>ALTERNATIVE SPLICING</scope>
    <scope>INVOLVEMENT IN WDSKS</scope>
</reference>
<feature type="chain" id="PRO_0000300118" description="DDB1- and CUL4-associated factor 17">
    <location>
        <begin position="1"/>
        <end position="520"/>
    </location>
</feature>
<feature type="transmembrane region" description="Helical" evidence="1">
    <location>
        <begin position="186"/>
        <end position="206"/>
    </location>
</feature>
<feature type="transmembrane region" description="Helical" evidence="1">
    <location>
        <begin position="222"/>
        <end position="242"/>
    </location>
</feature>
<feature type="splice variant" id="VSP_027788" description="In isoform 2." evidence="4 5">
    <location>
        <begin position="1"/>
        <end position="280"/>
    </location>
</feature>
<feature type="sequence variant" id="VAR_050711" description="In dbSNP:rs3731984.">
    <original>H</original>
    <variation>Q</variation>
    <location>
        <position position="185"/>
    </location>
</feature>
<feature type="sequence conflict" description="In Ref. 1; BAB14436." evidence="6" ref="1">
    <original>Q</original>
    <variation>H</variation>
    <location>
        <position position="504"/>
    </location>
</feature>
<protein>
    <recommendedName>
        <fullName>DDB1- and CUL4-associated factor 17</fullName>
    </recommendedName>
</protein>
<sequence>MGPTRKPNVCSRLSRRALGCFSRDAGVVQRTNLGILRALVCQESTKFKNVWTTHSRSPIAYERGRIYFDNYRRCVSSVASEPRKLYEMPKCSKSEKIEDALLWECPVGDILPNSSDYKSSLIALTAHNWLLRISATTGKILEKIYLAPYCKFRYLSWDTPQEVIAVKSAQNRGSAVARQAGIQQHVLLYLAVFRVLPFSLVGILEINKKIFGNVTDATLSHGILIVMYSSGLVRLYSFQTIAEQFMQQKLDLGCACRWGGTTGTVGEAPFGIPCNIKITDMPPLLFEVSSLENAFQIGGHPWHYIVTPNKKKQKGVFHICALKDNSLAKNGIQEMDCCSLESDWIYFHPDASGRIIHVGPNQVKVLKLTEIENNSSQHQISEDFVILANRENHKNENVLTVTASGRVVKKSFNLLDDDPEQETFKIVDYEDELDLLSVVAVTQIDAEGKAHLDFHCNEYGTLLKSIPLVESWDVTYSHEVYFDRDLVLHIEQKPNRVFSCYVYQMICDTGEEEETINRSC</sequence>
<proteinExistence type="evidence at protein level"/>
<comment type="function">
    <text evidence="2">May function as a substrate receptor for CUL4-DDB1 E3 ubiquitin-protein ligase complex.</text>
</comment>
<comment type="pathway">
    <text>Protein modification; protein ubiquitination.</text>
</comment>
<comment type="subunit">
    <text evidence="2">Interacts with DDB1, CUL4A and CUL4B.</text>
</comment>
<comment type="subcellular location">
    <subcellularLocation>
        <location evidence="6">Membrane</location>
        <topology evidence="6">Multi-pass membrane protein</topology>
    </subcellularLocation>
    <subcellularLocation>
        <location evidence="3">Nucleus</location>
        <location evidence="3">Nucleolus</location>
    </subcellularLocation>
    <text>According to PubMed:19026396, it is a nucleolar protein, while sequence analysis programs clearly predict 2 transmembrane regions.</text>
</comment>
<comment type="alternative products">
    <event type="alternative splicing"/>
    <isoform>
        <id>Q5H9S7-1</id>
        <name>1</name>
        <sequence type="displayed"/>
    </isoform>
    <isoform>
        <id>Q5H9S7-2</id>
        <name>2</name>
        <sequence type="described" ref="VSP_027788"/>
    </isoform>
</comment>
<comment type="tissue specificity">
    <text evidence="3">Ubiquitously expressed.</text>
</comment>
<comment type="disease" evidence="3">
    <disease id="DI-02424">
        <name>Woodhouse-Sakati syndrome</name>
        <acronym>WDSKS</acronym>
        <description>A rare autosomal recessive disorder characterized by hypogonadism, alopecia, diabetes mellitus, intellectual disability, and extrapyramidal syndrome.</description>
        <dbReference type="MIM" id="241080"/>
    </disease>
    <text>The disease is caused by variants affecting the gene represented in this entry.</text>
</comment>
<gene>
    <name type="primary">DCAF17</name>
    <name type="synonym">C2orf37</name>
</gene>
<name>DCA17_HUMAN</name>
<organism>
    <name type="scientific">Homo sapiens</name>
    <name type="common">Human</name>
    <dbReference type="NCBI Taxonomy" id="9606"/>
    <lineage>
        <taxon>Eukaryota</taxon>
        <taxon>Metazoa</taxon>
        <taxon>Chordata</taxon>
        <taxon>Craniata</taxon>
        <taxon>Vertebrata</taxon>
        <taxon>Euteleostomi</taxon>
        <taxon>Mammalia</taxon>
        <taxon>Eutheria</taxon>
        <taxon>Euarchontoglires</taxon>
        <taxon>Primates</taxon>
        <taxon>Haplorrhini</taxon>
        <taxon>Catarrhini</taxon>
        <taxon>Hominidae</taxon>
        <taxon>Homo</taxon>
    </lineage>
</organism>
<accession>Q5H9S7</accession>
<accession>B2RTW5</accession>
<accession>Q53TN3</accession>
<accession>Q9H908</accession>
<keyword id="KW-0025">Alternative splicing</keyword>
<keyword id="KW-0209">Deafness</keyword>
<keyword id="KW-0219">Diabetes mellitus</keyword>
<keyword id="KW-1063">Hypotrichosis</keyword>
<keyword id="KW-0991">Intellectual disability</keyword>
<keyword id="KW-0472">Membrane</keyword>
<keyword id="KW-0539">Nucleus</keyword>
<keyword id="KW-1267">Proteomics identification</keyword>
<keyword id="KW-1185">Reference proteome</keyword>
<keyword id="KW-0812">Transmembrane</keyword>
<keyword id="KW-1133">Transmembrane helix</keyword>
<keyword id="KW-0833">Ubl conjugation pathway</keyword>
<dbReference type="EMBL" id="AK023158">
    <property type="protein sequence ID" value="BAB14436.1"/>
    <property type="molecule type" value="mRNA"/>
</dbReference>
<dbReference type="EMBL" id="CR933646">
    <property type="protein sequence ID" value="CAI45947.1"/>
    <property type="molecule type" value="mRNA"/>
</dbReference>
<dbReference type="EMBL" id="AC007969">
    <property type="protein sequence ID" value="AAY14729.1"/>
    <property type="molecule type" value="Genomic_DNA"/>
</dbReference>
<dbReference type="EMBL" id="CH471058">
    <property type="protein sequence ID" value="EAX11213.1"/>
    <property type="molecule type" value="Genomic_DNA"/>
</dbReference>
<dbReference type="EMBL" id="BC120957">
    <property type="protein sequence ID" value="AAI20958.1"/>
    <property type="molecule type" value="mRNA"/>
</dbReference>
<dbReference type="EMBL" id="BC140843">
    <property type="protein sequence ID" value="AAI40844.1"/>
    <property type="molecule type" value="mRNA"/>
</dbReference>
<dbReference type="CCDS" id="CCDS2243.2">
    <molecule id="Q5H9S7-1"/>
</dbReference>
<dbReference type="RefSeq" id="NP_079276.2">
    <molecule id="Q5H9S7-1"/>
    <property type="nucleotide sequence ID" value="NM_025000.4"/>
</dbReference>
<dbReference type="BioGRID" id="123098">
    <property type="interactions" value="18"/>
</dbReference>
<dbReference type="ComplexPortal" id="CPX-2415">
    <property type="entry name" value="CRL4-DCAF17 E3 ubiquitin ligase complex, CUL4A variant"/>
</dbReference>
<dbReference type="ComplexPortal" id="CPX-2416">
    <property type="entry name" value="CRL4-DCAF17 E3 ubiquitin ligase complex, CUL4B variant"/>
</dbReference>
<dbReference type="FunCoup" id="Q5H9S7">
    <property type="interactions" value="2384"/>
</dbReference>
<dbReference type="IntAct" id="Q5H9S7">
    <property type="interactions" value="7"/>
</dbReference>
<dbReference type="STRING" id="9606.ENSP00000364404"/>
<dbReference type="GlyGen" id="Q5H9S7">
    <property type="glycosylation" value="1 site, 1 O-linked glycan (1 site)"/>
</dbReference>
<dbReference type="iPTMnet" id="Q5H9S7"/>
<dbReference type="PhosphoSitePlus" id="Q5H9S7"/>
<dbReference type="BioMuta" id="DCAF17"/>
<dbReference type="DMDM" id="74707874"/>
<dbReference type="jPOST" id="Q5H9S7"/>
<dbReference type="MassIVE" id="Q5H9S7"/>
<dbReference type="PaxDb" id="9606-ENSP00000364404"/>
<dbReference type="PeptideAtlas" id="Q5H9S7"/>
<dbReference type="ProteomicsDB" id="62909">
    <molecule id="Q5H9S7-1"/>
</dbReference>
<dbReference type="ProteomicsDB" id="62910">
    <molecule id="Q5H9S7-2"/>
</dbReference>
<dbReference type="Antibodypedia" id="65882">
    <property type="antibodies" value="39 antibodies from 14 providers"/>
</dbReference>
<dbReference type="DNASU" id="80067"/>
<dbReference type="Ensembl" id="ENST00000375255.8">
    <molecule id="Q5H9S7-1"/>
    <property type="protein sequence ID" value="ENSP00000364404.3"/>
    <property type="gene ID" value="ENSG00000115827.14"/>
</dbReference>
<dbReference type="Ensembl" id="ENST00000611110.4">
    <molecule id="Q5H9S7-2"/>
    <property type="protein sequence ID" value="ENSP00000477604.1"/>
    <property type="gene ID" value="ENSG00000115827.14"/>
</dbReference>
<dbReference type="GeneID" id="80067"/>
<dbReference type="KEGG" id="hsa:80067"/>
<dbReference type="MANE-Select" id="ENST00000375255.8">
    <property type="protein sequence ID" value="ENSP00000364404.3"/>
    <property type="RefSeq nucleotide sequence ID" value="NM_025000.4"/>
    <property type="RefSeq protein sequence ID" value="NP_079276.2"/>
</dbReference>
<dbReference type="UCSC" id="uc002ugx.3">
    <molecule id="Q5H9S7-1"/>
    <property type="organism name" value="human"/>
</dbReference>
<dbReference type="AGR" id="HGNC:25784"/>
<dbReference type="CTD" id="80067"/>
<dbReference type="DisGeNET" id="80067"/>
<dbReference type="GeneCards" id="DCAF17"/>
<dbReference type="GeneReviews" id="DCAF17"/>
<dbReference type="HGNC" id="HGNC:25784">
    <property type="gene designation" value="DCAF17"/>
</dbReference>
<dbReference type="HPA" id="ENSG00000115827">
    <property type="expression patterns" value="Low tissue specificity"/>
</dbReference>
<dbReference type="MalaCards" id="DCAF17"/>
<dbReference type="MIM" id="241080">
    <property type="type" value="phenotype"/>
</dbReference>
<dbReference type="MIM" id="612515">
    <property type="type" value="gene"/>
</dbReference>
<dbReference type="neXtProt" id="NX_Q5H9S7"/>
<dbReference type="OpenTargets" id="ENSG00000115827"/>
<dbReference type="PharmGKB" id="PA165696520"/>
<dbReference type="VEuPathDB" id="HostDB:ENSG00000115827"/>
<dbReference type="eggNOG" id="ENOG502QQ41">
    <property type="taxonomic scope" value="Eukaryota"/>
</dbReference>
<dbReference type="GeneTree" id="ENSGT00390000012728"/>
<dbReference type="HOGENOM" id="CLU_072608_0_0_1"/>
<dbReference type="InParanoid" id="Q5H9S7"/>
<dbReference type="OMA" id="IQEMNCC"/>
<dbReference type="OrthoDB" id="9971789at2759"/>
<dbReference type="PAN-GO" id="Q5H9S7">
    <property type="GO annotations" value="1 GO annotation based on evolutionary models"/>
</dbReference>
<dbReference type="PhylomeDB" id="Q5H9S7"/>
<dbReference type="TreeFam" id="TF328801"/>
<dbReference type="PathwayCommons" id="Q5H9S7"/>
<dbReference type="Reactome" id="R-HSA-8951664">
    <property type="pathway name" value="Neddylation"/>
</dbReference>
<dbReference type="SignaLink" id="Q5H9S7"/>
<dbReference type="UniPathway" id="UPA00143"/>
<dbReference type="BioGRID-ORCS" id="80067">
    <property type="hits" value="19 hits in 1201 CRISPR screens"/>
</dbReference>
<dbReference type="CD-CODE" id="91857CE7">
    <property type="entry name" value="Nucleolus"/>
</dbReference>
<dbReference type="ChiTaRS" id="DCAF17">
    <property type="organism name" value="human"/>
</dbReference>
<dbReference type="GeneWiki" id="DCAF17"/>
<dbReference type="GenomeRNAi" id="80067"/>
<dbReference type="Pharos" id="Q5H9S7">
    <property type="development level" value="Tbio"/>
</dbReference>
<dbReference type="PRO" id="PR:Q5H9S7"/>
<dbReference type="Proteomes" id="UP000005640">
    <property type="component" value="Chromosome 2"/>
</dbReference>
<dbReference type="RNAct" id="Q5H9S7">
    <property type="molecule type" value="protein"/>
</dbReference>
<dbReference type="Bgee" id="ENSG00000115827">
    <property type="expression patterns" value="Expressed in cortical plate and 141 other cell types or tissues"/>
</dbReference>
<dbReference type="ExpressionAtlas" id="Q5H9S7">
    <property type="expression patterns" value="baseline and differential"/>
</dbReference>
<dbReference type="GO" id="GO:0080008">
    <property type="term" value="C:Cul4-RING E3 ubiquitin ligase complex"/>
    <property type="evidence" value="ECO:0000314"/>
    <property type="project" value="UniProtKB"/>
</dbReference>
<dbReference type="GO" id="GO:0005829">
    <property type="term" value="C:cytosol"/>
    <property type="evidence" value="ECO:0000314"/>
    <property type="project" value="HPA"/>
</dbReference>
<dbReference type="GO" id="GO:0016020">
    <property type="term" value="C:membrane"/>
    <property type="evidence" value="ECO:0007669"/>
    <property type="project" value="UniProtKB-SubCell"/>
</dbReference>
<dbReference type="GO" id="GO:0005730">
    <property type="term" value="C:nucleolus"/>
    <property type="evidence" value="ECO:0007669"/>
    <property type="project" value="UniProtKB-SubCell"/>
</dbReference>
<dbReference type="GO" id="GO:0005654">
    <property type="term" value="C:nucleoplasm"/>
    <property type="evidence" value="ECO:0000314"/>
    <property type="project" value="HPA"/>
</dbReference>
<dbReference type="GO" id="GO:0001675">
    <property type="term" value="P:acrosome assembly"/>
    <property type="evidence" value="ECO:0007669"/>
    <property type="project" value="Ensembl"/>
</dbReference>
<dbReference type="GO" id="GO:0000902">
    <property type="term" value="P:cell morphogenesis"/>
    <property type="evidence" value="ECO:0007669"/>
    <property type="project" value="Ensembl"/>
</dbReference>
<dbReference type="GO" id="GO:0016567">
    <property type="term" value="P:protein ubiquitination"/>
    <property type="evidence" value="ECO:0007669"/>
    <property type="project" value="UniProtKB-UniPathway"/>
</dbReference>
<dbReference type="InterPro" id="IPR031620">
    <property type="entry name" value="DCAF17"/>
</dbReference>
<dbReference type="PANTHER" id="PTHR14815">
    <property type="entry name" value="DDB1- AND CUL4-ASSOCIATED FACTOR 17"/>
    <property type="match status" value="1"/>
</dbReference>
<dbReference type="PANTHER" id="PTHR14815:SF2">
    <property type="entry name" value="DDB1- AND CUL4-ASSOCIATED FACTOR 17"/>
    <property type="match status" value="1"/>
</dbReference>
<dbReference type="Pfam" id="PF15802">
    <property type="entry name" value="DCAF17"/>
    <property type="match status" value="1"/>
</dbReference>
<evidence type="ECO:0000255" key="1"/>
<evidence type="ECO:0000269" key="2">
    <source>
    </source>
</evidence>
<evidence type="ECO:0000269" key="3">
    <source>
    </source>
</evidence>
<evidence type="ECO:0000303" key="4">
    <source>
    </source>
</evidence>
<evidence type="ECO:0000303" key="5">
    <source>
    </source>
</evidence>
<evidence type="ECO:0000305" key="6"/>